<sequence>MANSLYQKHIISIPELSRQELELIVETAGKIKKEPQPDLLKNKIVASCFFEASTRTRLSFETAIQRLGGSVIGFDTAGNTSLAQKGETLADSVQIITSYADAYVMRHPQEGAARLASEFSNGTPVINAGDGANQHPTQTLLDLYTIYETQGRLDNLNVAFVGDLKYGRTVHSLTQALAKFEGIKFFFIAPEVLAMPDYICEELDELGIEYQLVESMDDAIPELDILYMTRVQKERFDESEYAHIKSAYILSAENLQPARENLKVLHPLPRVDEIDTDVDATPHAYYFQQAENGVYARQALLALVLNETL</sequence>
<accession>B5F9P9</accession>
<keyword id="KW-0665">Pyrimidine biosynthesis</keyword>
<keyword id="KW-0808">Transferase</keyword>
<gene>
    <name evidence="1" type="primary">pyrB</name>
    <name type="ordered locus">VFMJ11_0396</name>
</gene>
<dbReference type="EC" id="2.1.3.2" evidence="1"/>
<dbReference type="EMBL" id="CP001139">
    <property type="protein sequence ID" value="ACH66497.1"/>
    <property type="molecule type" value="Genomic_DNA"/>
</dbReference>
<dbReference type="RefSeq" id="WP_012533771.1">
    <property type="nucleotide sequence ID" value="NC_011184.1"/>
</dbReference>
<dbReference type="SMR" id="B5F9P9"/>
<dbReference type="KEGG" id="vfm:VFMJ11_0396"/>
<dbReference type="HOGENOM" id="CLU_043846_1_2_6"/>
<dbReference type="UniPathway" id="UPA00070">
    <property type="reaction ID" value="UER00116"/>
</dbReference>
<dbReference type="Proteomes" id="UP000001857">
    <property type="component" value="Chromosome I"/>
</dbReference>
<dbReference type="GO" id="GO:0005829">
    <property type="term" value="C:cytosol"/>
    <property type="evidence" value="ECO:0007669"/>
    <property type="project" value="TreeGrafter"/>
</dbReference>
<dbReference type="GO" id="GO:0016597">
    <property type="term" value="F:amino acid binding"/>
    <property type="evidence" value="ECO:0007669"/>
    <property type="project" value="InterPro"/>
</dbReference>
<dbReference type="GO" id="GO:0004070">
    <property type="term" value="F:aspartate carbamoyltransferase activity"/>
    <property type="evidence" value="ECO:0007669"/>
    <property type="project" value="UniProtKB-UniRule"/>
</dbReference>
<dbReference type="GO" id="GO:0006207">
    <property type="term" value="P:'de novo' pyrimidine nucleobase biosynthetic process"/>
    <property type="evidence" value="ECO:0007669"/>
    <property type="project" value="InterPro"/>
</dbReference>
<dbReference type="GO" id="GO:0044205">
    <property type="term" value="P:'de novo' UMP biosynthetic process"/>
    <property type="evidence" value="ECO:0007669"/>
    <property type="project" value="UniProtKB-UniRule"/>
</dbReference>
<dbReference type="GO" id="GO:0006520">
    <property type="term" value="P:amino acid metabolic process"/>
    <property type="evidence" value="ECO:0007669"/>
    <property type="project" value="InterPro"/>
</dbReference>
<dbReference type="FunFam" id="3.40.50.1370:FF:000001">
    <property type="entry name" value="Aspartate carbamoyltransferase"/>
    <property type="match status" value="1"/>
</dbReference>
<dbReference type="FunFam" id="3.40.50.1370:FF:000002">
    <property type="entry name" value="Aspartate carbamoyltransferase 2"/>
    <property type="match status" value="1"/>
</dbReference>
<dbReference type="Gene3D" id="3.40.50.1370">
    <property type="entry name" value="Aspartate/ornithine carbamoyltransferase"/>
    <property type="match status" value="2"/>
</dbReference>
<dbReference type="HAMAP" id="MF_00001">
    <property type="entry name" value="Asp_carb_tr"/>
    <property type="match status" value="1"/>
</dbReference>
<dbReference type="InterPro" id="IPR006132">
    <property type="entry name" value="Asp/Orn_carbamoyltranf_P-bd"/>
</dbReference>
<dbReference type="InterPro" id="IPR006130">
    <property type="entry name" value="Asp/Orn_carbamoylTrfase"/>
</dbReference>
<dbReference type="InterPro" id="IPR036901">
    <property type="entry name" value="Asp/Orn_carbamoylTrfase_sf"/>
</dbReference>
<dbReference type="InterPro" id="IPR002082">
    <property type="entry name" value="Asp_carbamoyltransf"/>
</dbReference>
<dbReference type="InterPro" id="IPR006131">
    <property type="entry name" value="Asp_carbamoyltransf_Asp/Orn-bd"/>
</dbReference>
<dbReference type="NCBIfam" id="TIGR00670">
    <property type="entry name" value="asp_carb_tr"/>
    <property type="match status" value="1"/>
</dbReference>
<dbReference type="NCBIfam" id="NF002032">
    <property type="entry name" value="PRK00856.1"/>
    <property type="match status" value="1"/>
</dbReference>
<dbReference type="PANTHER" id="PTHR45753:SF6">
    <property type="entry name" value="ASPARTATE CARBAMOYLTRANSFERASE"/>
    <property type="match status" value="1"/>
</dbReference>
<dbReference type="PANTHER" id="PTHR45753">
    <property type="entry name" value="ORNITHINE CARBAMOYLTRANSFERASE, MITOCHONDRIAL"/>
    <property type="match status" value="1"/>
</dbReference>
<dbReference type="Pfam" id="PF00185">
    <property type="entry name" value="OTCace"/>
    <property type="match status" value="1"/>
</dbReference>
<dbReference type="Pfam" id="PF02729">
    <property type="entry name" value="OTCace_N"/>
    <property type="match status" value="1"/>
</dbReference>
<dbReference type="PRINTS" id="PR00100">
    <property type="entry name" value="AOTCASE"/>
</dbReference>
<dbReference type="PRINTS" id="PR00101">
    <property type="entry name" value="ATCASE"/>
</dbReference>
<dbReference type="SUPFAM" id="SSF53671">
    <property type="entry name" value="Aspartate/ornithine carbamoyltransferase"/>
    <property type="match status" value="1"/>
</dbReference>
<dbReference type="PROSITE" id="PS00097">
    <property type="entry name" value="CARBAMOYLTRANSFERASE"/>
    <property type="match status" value="1"/>
</dbReference>
<comment type="function">
    <text evidence="1">Catalyzes the condensation of carbamoyl phosphate and aspartate to form carbamoyl aspartate and inorganic phosphate, the committed step in the de novo pyrimidine nucleotide biosynthesis pathway.</text>
</comment>
<comment type="catalytic activity">
    <reaction evidence="1">
        <text>carbamoyl phosphate + L-aspartate = N-carbamoyl-L-aspartate + phosphate + H(+)</text>
        <dbReference type="Rhea" id="RHEA:20013"/>
        <dbReference type="ChEBI" id="CHEBI:15378"/>
        <dbReference type="ChEBI" id="CHEBI:29991"/>
        <dbReference type="ChEBI" id="CHEBI:32814"/>
        <dbReference type="ChEBI" id="CHEBI:43474"/>
        <dbReference type="ChEBI" id="CHEBI:58228"/>
        <dbReference type="EC" id="2.1.3.2"/>
    </reaction>
</comment>
<comment type="pathway">
    <text evidence="1">Pyrimidine metabolism; UMP biosynthesis via de novo pathway; (S)-dihydroorotate from bicarbonate: step 2/3.</text>
</comment>
<comment type="subunit">
    <text evidence="1">Heterododecamer (2C3:3R2) of six catalytic PyrB chains organized as two trimers (C3), and six regulatory PyrI chains organized as three dimers (R2).</text>
</comment>
<comment type="similarity">
    <text evidence="1">Belongs to the aspartate/ornithine carbamoyltransferase superfamily. ATCase family.</text>
</comment>
<evidence type="ECO:0000255" key="1">
    <source>
        <dbReference type="HAMAP-Rule" id="MF_00001"/>
    </source>
</evidence>
<name>PYRB_ALIFM</name>
<organism>
    <name type="scientific">Aliivibrio fischeri (strain MJ11)</name>
    <name type="common">Vibrio fischeri</name>
    <dbReference type="NCBI Taxonomy" id="388396"/>
    <lineage>
        <taxon>Bacteria</taxon>
        <taxon>Pseudomonadati</taxon>
        <taxon>Pseudomonadota</taxon>
        <taxon>Gammaproteobacteria</taxon>
        <taxon>Vibrionales</taxon>
        <taxon>Vibrionaceae</taxon>
        <taxon>Aliivibrio</taxon>
    </lineage>
</organism>
<proteinExistence type="inferred from homology"/>
<protein>
    <recommendedName>
        <fullName evidence="1">Aspartate carbamoyltransferase catalytic subunit</fullName>
        <ecNumber evidence="1">2.1.3.2</ecNumber>
    </recommendedName>
    <alternativeName>
        <fullName evidence="1">Aspartate transcarbamylase</fullName>
        <shortName evidence="1">ATCase</shortName>
    </alternativeName>
</protein>
<feature type="chain" id="PRO_1000088814" description="Aspartate carbamoyltransferase catalytic subunit">
    <location>
        <begin position="1"/>
        <end position="309"/>
    </location>
</feature>
<feature type="binding site" evidence="1">
    <location>
        <position position="55"/>
    </location>
    <ligand>
        <name>carbamoyl phosphate</name>
        <dbReference type="ChEBI" id="CHEBI:58228"/>
    </ligand>
</feature>
<feature type="binding site" evidence="1">
    <location>
        <position position="56"/>
    </location>
    <ligand>
        <name>carbamoyl phosphate</name>
        <dbReference type="ChEBI" id="CHEBI:58228"/>
    </ligand>
</feature>
<feature type="binding site" evidence="1">
    <location>
        <position position="85"/>
    </location>
    <ligand>
        <name>L-aspartate</name>
        <dbReference type="ChEBI" id="CHEBI:29991"/>
    </ligand>
</feature>
<feature type="binding site" evidence="1">
    <location>
        <position position="106"/>
    </location>
    <ligand>
        <name>carbamoyl phosphate</name>
        <dbReference type="ChEBI" id="CHEBI:58228"/>
    </ligand>
</feature>
<feature type="binding site" evidence="1">
    <location>
        <position position="135"/>
    </location>
    <ligand>
        <name>carbamoyl phosphate</name>
        <dbReference type="ChEBI" id="CHEBI:58228"/>
    </ligand>
</feature>
<feature type="binding site" evidence="1">
    <location>
        <position position="138"/>
    </location>
    <ligand>
        <name>carbamoyl phosphate</name>
        <dbReference type="ChEBI" id="CHEBI:58228"/>
    </ligand>
</feature>
<feature type="binding site" evidence="1">
    <location>
        <position position="168"/>
    </location>
    <ligand>
        <name>L-aspartate</name>
        <dbReference type="ChEBI" id="CHEBI:29991"/>
    </ligand>
</feature>
<feature type="binding site" evidence="1">
    <location>
        <position position="230"/>
    </location>
    <ligand>
        <name>L-aspartate</name>
        <dbReference type="ChEBI" id="CHEBI:29991"/>
    </ligand>
</feature>
<feature type="binding site" evidence="1">
    <location>
        <position position="268"/>
    </location>
    <ligand>
        <name>carbamoyl phosphate</name>
        <dbReference type="ChEBI" id="CHEBI:58228"/>
    </ligand>
</feature>
<feature type="binding site" evidence="1">
    <location>
        <position position="269"/>
    </location>
    <ligand>
        <name>carbamoyl phosphate</name>
        <dbReference type="ChEBI" id="CHEBI:58228"/>
    </ligand>
</feature>
<reference key="1">
    <citation type="submission" date="2008-08" db="EMBL/GenBank/DDBJ databases">
        <title>Complete sequence of Vibrio fischeri strain MJ11.</title>
        <authorList>
            <person name="Mandel M.J."/>
            <person name="Stabb E.V."/>
            <person name="Ruby E.G."/>
            <person name="Ferriera S."/>
            <person name="Johnson J."/>
            <person name="Kravitz S."/>
            <person name="Beeson K."/>
            <person name="Sutton G."/>
            <person name="Rogers Y.-H."/>
            <person name="Friedman R."/>
            <person name="Frazier M."/>
            <person name="Venter J.C."/>
        </authorList>
    </citation>
    <scope>NUCLEOTIDE SEQUENCE [LARGE SCALE GENOMIC DNA]</scope>
    <source>
        <strain>MJ11</strain>
    </source>
</reference>